<reference key="1">
    <citation type="journal article" date="2011" name="J. Bacteriol.">
        <title>Comparative genomics of 28 Salmonella enterica isolates: evidence for CRISPR-mediated adaptive sublineage evolution.</title>
        <authorList>
            <person name="Fricke W.F."/>
            <person name="Mammel M.K."/>
            <person name="McDermott P.F."/>
            <person name="Tartera C."/>
            <person name="White D.G."/>
            <person name="Leclerc J.E."/>
            <person name="Ravel J."/>
            <person name="Cebula T.A."/>
        </authorList>
    </citation>
    <scope>NUCLEOTIDE SEQUENCE [LARGE SCALE GENOMIC DNA]</scope>
    <source>
        <strain>SL483</strain>
    </source>
</reference>
<name>MINC_SALA4</name>
<accession>B5F3S8</accession>
<protein>
    <recommendedName>
        <fullName evidence="1">Probable septum site-determining protein MinC</fullName>
    </recommendedName>
</protein>
<sequence length="235" mass="25246">MSNTPIELKGSSFTLSVVHLHEAEPEVIRQALEDKIAQAPAFLKHAPVVINVSGLESPVNWPELHKIVTSTGLRIIGVSGCKDASLKVEIDRMGLPLLTEGKEKAVRPAPVEPATPSEPPQNANPITKTRLIDVPVRSGQRIYAPQCDLIVTSHVSAGAELIADGNIHVYGMMRGRALAGASGDREAQIFCTHLTAELVSIAGVYWLSDKIPAEFYGKAARLRLADNALTVQPLN</sequence>
<evidence type="ECO:0000255" key="1">
    <source>
        <dbReference type="HAMAP-Rule" id="MF_00267"/>
    </source>
</evidence>
<evidence type="ECO:0000256" key="2">
    <source>
        <dbReference type="SAM" id="MobiDB-lite"/>
    </source>
</evidence>
<comment type="function">
    <text evidence="1">Cell division inhibitor that blocks the formation of polar Z ring septums. Rapidly oscillates between the poles of the cell to destabilize FtsZ filaments that have formed before they mature into polar Z rings. Prevents FtsZ polymerization.</text>
</comment>
<comment type="subunit">
    <text evidence="1">Interacts with MinD and FtsZ.</text>
</comment>
<comment type="similarity">
    <text evidence="1">Belongs to the MinC family.</text>
</comment>
<organism>
    <name type="scientific">Salmonella agona (strain SL483)</name>
    <dbReference type="NCBI Taxonomy" id="454166"/>
    <lineage>
        <taxon>Bacteria</taxon>
        <taxon>Pseudomonadati</taxon>
        <taxon>Pseudomonadota</taxon>
        <taxon>Gammaproteobacteria</taxon>
        <taxon>Enterobacterales</taxon>
        <taxon>Enterobacteriaceae</taxon>
        <taxon>Salmonella</taxon>
    </lineage>
</organism>
<feature type="chain" id="PRO_1000114287" description="Probable septum site-determining protein MinC">
    <location>
        <begin position="1"/>
        <end position="235"/>
    </location>
</feature>
<feature type="region of interest" description="Disordered" evidence="2">
    <location>
        <begin position="104"/>
        <end position="125"/>
    </location>
</feature>
<feature type="compositionally biased region" description="Pro residues" evidence="2">
    <location>
        <begin position="110"/>
        <end position="119"/>
    </location>
</feature>
<proteinExistence type="inferred from homology"/>
<dbReference type="EMBL" id="CP001138">
    <property type="protein sequence ID" value="ACH52351.1"/>
    <property type="molecule type" value="Genomic_DNA"/>
</dbReference>
<dbReference type="RefSeq" id="WP_000072527.1">
    <property type="nucleotide sequence ID" value="NC_011149.1"/>
</dbReference>
<dbReference type="SMR" id="B5F3S8"/>
<dbReference type="KEGG" id="sea:SeAg_B1319"/>
<dbReference type="HOGENOM" id="CLU_067812_0_1_6"/>
<dbReference type="Proteomes" id="UP000008819">
    <property type="component" value="Chromosome"/>
</dbReference>
<dbReference type="GO" id="GO:0000902">
    <property type="term" value="P:cell morphogenesis"/>
    <property type="evidence" value="ECO:0007669"/>
    <property type="project" value="InterPro"/>
</dbReference>
<dbReference type="GO" id="GO:0000917">
    <property type="term" value="P:division septum assembly"/>
    <property type="evidence" value="ECO:0007669"/>
    <property type="project" value="UniProtKB-KW"/>
</dbReference>
<dbReference type="GO" id="GO:0051302">
    <property type="term" value="P:regulation of cell division"/>
    <property type="evidence" value="ECO:0007669"/>
    <property type="project" value="InterPro"/>
</dbReference>
<dbReference type="GO" id="GO:1901891">
    <property type="term" value="P:regulation of cell septum assembly"/>
    <property type="evidence" value="ECO:0007669"/>
    <property type="project" value="InterPro"/>
</dbReference>
<dbReference type="FunFam" id="2.160.20.70:FF:000002">
    <property type="entry name" value="Probable septum site-determining protein MinC"/>
    <property type="match status" value="1"/>
</dbReference>
<dbReference type="Gene3D" id="2.160.20.70">
    <property type="match status" value="1"/>
</dbReference>
<dbReference type="Gene3D" id="3.30.70.260">
    <property type="match status" value="1"/>
</dbReference>
<dbReference type="HAMAP" id="MF_00267">
    <property type="entry name" value="MinC"/>
    <property type="match status" value="1"/>
</dbReference>
<dbReference type="InterPro" id="IPR016098">
    <property type="entry name" value="CAP/MinC_C"/>
</dbReference>
<dbReference type="InterPro" id="IPR013033">
    <property type="entry name" value="MinC"/>
</dbReference>
<dbReference type="InterPro" id="IPR036145">
    <property type="entry name" value="MinC_C_sf"/>
</dbReference>
<dbReference type="InterPro" id="IPR007874">
    <property type="entry name" value="MinC_N"/>
</dbReference>
<dbReference type="InterPro" id="IPR005526">
    <property type="entry name" value="Septum_form_inhib_MinC_C"/>
</dbReference>
<dbReference type="NCBIfam" id="TIGR01222">
    <property type="entry name" value="minC"/>
    <property type="match status" value="1"/>
</dbReference>
<dbReference type="PANTHER" id="PTHR34108">
    <property type="entry name" value="SEPTUM SITE-DETERMINING PROTEIN MINC"/>
    <property type="match status" value="1"/>
</dbReference>
<dbReference type="PANTHER" id="PTHR34108:SF1">
    <property type="entry name" value="SEPTUM SITE-DETERMINING PROTEIN MINC"/>
    <property type="match status" value="1"/>
</dbReference>
<dbReference type="Pfam" id="PF03775">
    <property type="entry name" value="MinC_C"/>
    <property type="match status" value="1"/>
</dbReference>
<dbReference type="Pfam" id="PF05209">
    <property type="entry name" value="MinC_N"/>
    <property type="match status" value="1"/>
</dbReference>
<dbReference type="SUPFAM" id="SSF63848">
    <property type="entry name" value="Cell-division inhibitor MinC, C-terminal domain"/>
    <property type="match status" value="1"/>
</dbReference>
<keyword id="KW-0131">Cell cycle</keyword>
<keyword id="KW-0132">Cell division</keyword>
<keyword id="KW-0717">Septation</keyword>
<gene>
    <name evidence="1" type="primary">minC</name>
    <name type="ordered locus">SeAg_B1319</name>
</gene>